<name>NDE1_DROME</name>
<feature type="chain" id="PRO_0000240209" description="Nuclear distribution protein nudE homolog">
    <location>
        <begin position="1"/>
        <end position="317"/>
    </location>
</feature>
<feature type="region of interest" description="Disordered" evidence="4">
    <location>
        <begin position="186"/>
        <end position="205"/>
    </location>
</feature>
<feature type="coiled-coil region" evidence="3">
    <location>
        <begin position="29"/>
        <end position="180"/>
    </location>
</feature>
<reference key="1">
    <citation type="journal article" date="2000" name="Science">
        <title>The genome sequence of Drosophila melanogaster.</title>
        <authorList>
            <person name="Adams M.D."/>
            <person name="Celniker S.E."/>
            <person name="Holt R.A."/>
            <person name="Evans C.A."/>
            <person name="Gocayne J.D."/>
            <person name="Amanatides P.G."/>
            <person name="Scherer S.E."/>
            <person name="Li P.W."/>
            <person name="Hoskins R.A."/>
            <person name="Galle R.F."/>
            <person name="George R.A."/>
            <person name="Lewis S.E."/>
            <person name="Richards S."/>
            <person name="Ashburner M."/>
            <person name="Henderson S.N."/>
            <person name="Sutton G.G."/>
            <person name="Wortman J.R."/>
            <person name="Yandell M.D."/>
            <person name="Zhang Q."/>
            <person name="Chen L.X."/>
            <person name="Brandon R.C."/>
            <person name="Rogers Y.-H.C."/>
            <person name="Blazej R.G."/>
            <person name="Champe M."/>
            <person name="Pfeiffer B.D."/>
            <person name="Wan K.H."/>
            <person name="Doyle C."/>
            <person name="Baxter E.G."/>
            <person name="Helt G."/>
            <person name="Nelson C.R."/>
            <person name="Miklos G.L.G."/>
            <person name="Abril J.F."/>
            <person name="Agbayani A."/>
            <person name="An H.-J."/>
            <person name="Andrews-Pfannkoch C."/>
            <person name="Baldwin D."/>
            <person name="Ballew R.M."/>
            <person name="Basu A."/>
            <person name="Baxendale J."/>
            <person name="Bayraktaroglu L."/>
            <person name="Beasley E.M."/>
            <person name="Beeson K.Y."/>
            <person name="Benos P.V."/>
            <person name="Berman B.P."/>
            <person name="Bhandari D."/>
            <person name="Bolshakov S."/>
            <person name="Borkova D."/>
            <person name="Botchan M.R."/>
            <person name="Bouck J."/>
            <person name="Brokstein P."/>
            <person name="Brottier P."/>
            <person name="Burtis K.C."/>
            <person name="Busam D.A."/>
            <person name="Butler H."/>
            <person name="Cadieu E."/>
            <person name="Center A."/>
            <person name="Chandra I."/>
            <person name="Cherry J.M."/>
            <person name="Cawley S."/>
            <person name="Dahlke C."/>
            <person name="Davenport L.B."/>
            <person name="Davies P."/>
            <person name="de Pablos B."/>
            <person name="Delcher A."/>
            <person name="Deng Z."/>
            <person name="Mays A.D."/>
            <person name="Dew I."/>
            <person name="Dietz S.M."/>
            <person name="Dodson K."/>
            <person name="Doup L.E."/>
            <person name="Downes M."/>
            <person name="Dugan-Rocha S."/>
            <person name="Dunkov B.C."/>
            <person name="Dunn P."/>
            <person name="Durbin K.J."/>
            <person name="Evangelista C.C."/>
            <person name="Ferraz C."/>
            <person name="Ferriera S."/>
            <person name="Fleischmann W."/>
            <person name="Fosler C."/>
            <person name="Gabrielian A.E."/>
            <person name="Garg N.S."/>
            <person name="Gelbart W.M."/>
            <person name="Glasser K."/>
            <person name="Glodek A."/>
            <person name="Gong F."/>
            <person name="Gorrell J.H."/>
            <person name="Gu Z."/>
            <person name="Guan P."/>
            <person name="Harris M."/>
            <person name="Harris N.L."/>
            <person name="Harvey D.A."/>
            <person name="Heiman T.J."/>
            <person name="Hernandez J.R."/>
            <person name="Houck J."/>
            <person name="Hostin D."/>
            <person name="Houston K.A."/>
            <person name="Howland T.J."/>
            <person name="Wei M.-H."/>
            <person name="Ibegwam C."/>
            <person name="Jalali M."/>
            <person name="Kalush F."/>
            <person name="Karpen G.H."/>
            <person name="Ke Z."/>
            <person name="Kennison J.A."/>
            <person name="Ketchum K.A."/>
            <person name="Kimmel B.E."/>
            <person name="Kodira C.D."/>
            <person name="Kraft C.L."/>
            <person name="Kravitz S."/>
            <person name="Kulp D."/>
            <person name="Lai Z."/>
            <person name="Lasko P."/>
            <person name="Lei Y."/>
            <person name="Levitsky A.A."/>
            <person name="Li J.H."/>
            <person name="Li Z."/>
            <person name="Liang Y."/>
            <person name="Lin X."/>
            <person name="Liu X."/>
            <person name="Mattei B."/>
            <person name="McIntosh T.C."/>
            <person name="McLeod M.P."/>
            <person name="McPherson D."/>
            <person name="Merkulov G."/>
            <person name="Milshina N.V."/>
            <person name="Mobarry C."/>
            <person name="Morris J."/>
            <person name="Moshrefi A."/>
            <person name="Mount S.M."/>
            <person name="Moy M."/>
            <person name="Murphy B."/>
            <person name="Murphy L."/>
            <person name="Muzny D.M."/>
            <person name="Nelson D.L."/>
            <person name="Nelson D.R."/>
            <person name="Nelson K.A."/>
            <person name="Nixon K."/>
            <person name="Nusskern D.R."/>
            <person name="Pacleb J.M."/>
            <person name="Palazzolo M."/>
            <person name="Pittman G.S."/>
            <person name="Pan S."/>
            <person name="Pollard J."/>
            <person name="Puri V."/>
            <person name="Reese M.G."/>
            <person name="Reinert K."/>
            <person name="Remington K."/>
            <person name="Saunders R.D.C."/>
            <person name="Scheeler F."/>
            <person name="Shen H."/>
            <person name="Shue B.C."/>
            <person name="Siden-Kiamos I."/>
            <person name="Simpson M."/>
            <person name="Skupski M.P."/>
            <person name="Smith T.J."/>
            <person name="Spier E."/>
            <person name="Spradling A.C."/>
            <person name="Stapleton M."/>
            <person name="Strong R."/>
            <person name="Sun E."/>
            <person name="Svirskas R."/>
            <person name="Tector C."/>
            <person name="Turner R."/>
            <person name="Venter E."/>
            <person name="Wang A.H."/>
            <person name="Wang X."/>
            <person name="Wang Z.-Y."/>
            <person name="Wassarman D.A."/>
            <person name="Weinstock G.M."/>
            <person name="Weissenbach J."/>
            <person name="Williams S.M."/>
            <person name="Woodage T."/>
            <person name="Worley K.C."/>
            <person name="Wu D."/>
            <person name="Yang S."/>
            <person name="Yao Q.A."/>
            <person name="Ye J."/>
            <person name="Yeh R.-F."/>
            <person name="Zaveri J.S."/>
            <person name="Zhan M."/>
            <person name="Zhang G."/>
            <person name="Zhao Q."/>
            <person name="Zheng L."/>
            <person name="Zheng X.H."/>
            <person name="Zhong F.N."/>
            <person name="Zhong W."/>
            <person name="Zhou X."/>
            <person name="Zhu S.C."/>
            <person name="Zhu X."/>
            <person name="Smith H.O."/>
            <person name="Gibbs R.A."/>
            <person name="Myers E.W."/>
            <person name="Rubin G.M."/>
            <person name="Venter J.C."/>
        </authorList>
    </citation>
    <scope>NUCLEOTIDE SEQUENCE [LARGE SCALE GENOMIC DNA]</scope>
    <source>
        <strain>Berkeley</strain>
    </source>
</reference>
<reference key="2">
    <citation type="journal article" date="2002" name="Genome Biol.">
        <title>Annotation of the Drosophila melanogaster euchromatic genome: a systematic review.</title>
        <authorList>
            <person name="Misra S."/>
            <person name="Crosby M.A."/>
            <person name="Mungall C.J."/>
            <person name="Matthews B.B."/>
            <person name="Campbell K.S."/>
            <person name="Hradecky P."/>
            <person name="Huang Y."/>
            <person name="Kaminker J.S."/>
            <person name="Millburn G.H."/>
            <person name="Prochnik S.E."/>
            <person name="Smith C.D."/>
            <person name="Tupy J.L."/>
            <person name="Whitfield E.J."/>
            <person name="Bayraktaroglu L."/>
            <person name="Berman B.P."/>
            <person name="Bettencourt B.R."/>
            <person name="Celniker S.E."/>
            <person name="de Grey A.D.N.J."/>
            <person name="Drysdale R.A."/>
            <person name="Harris N.L."/>
            <person name="Richter J."/>
            <person name="Russo S."/>
            <person name="Schroeder A.J."/>
            <person name="Shu S.Q."/>
            <person name="Stapleton M."/>
            <person name="Yamada C."/>
            <person name="Ashburner M."/>
            <person name="Gelbart W.M."/>
            <person name="Rubin G.M."/>
            <person name="Lewis S.E."/>
        </authorList>
    </citation>
    <scope>GENOME REANNOTATION</scope>
    <source>
        <strain>Berkeley</strain>
    </source>
</reference>
<reference key="3">
    <citation type="journal article" date="2002" name="Genome Biol.">
        <title>A Drosophila full-length cDNA resource.</title>
        <authorList>
            <person name="Stapleton M."/>
            <person name="Carlson J.W."/>
            <person name="Brokstein P."/>
            <person name="Yu C."/>
            <person name="Champe M."/>
            <person name="George R.A."/>
            <person name="Guarin H."/>
            <person name="Kronmiller B."/>
            <person name="Pacleb J.M."/>
            <person name="Park S."/>
            <person name="Wan K.H."/>
            <person name="Rubin G.M."/>
            <person name="Celniker S.E."/>
        </authorList>
    </citation>
    <scope>NUCLEOTIDE SEQUENCE [LARGE SCALE MRNA]</scope>
    <source>
        <strain>Berkeley</strain>
        <tissue>Embryo</tissue>
    </source>
</reference>
<reference key="4">
    <citation type="journal article" date="2015" name="J. Neurosci.">
        <title>The Krueppel-Like factor Dar1 determines multipolar neuron morphology.</title>
        <authorList>
            <person name="Wang X."/>
            <person name="Zhang M.W."/>
            <person name="Kim J.H."/>
            <person name="Macara A.M."/>
            <person name="Sterne G."/>
            <person name="Yang T."/>
            <person name="Ye B."/>
        </authorList>
    </citation>
    <scope>FUNCTION</scope>
    <scope>DISRUPTION PHENOTYPE</scope>
</reference>
<dbReference type="EMBL" id="AE014296">
    <property type="protein sequence ID" value="AAF50184.2"/>
    <property type="molecule type" value="Genomic_DNA"/>
</dbReference>
<dbReference type="EMBL" id="AY061280">
    <property type="protein sequence ID" value="AAL28828.1"/>
    <property type="molecule type" value="mRNA"/>
</dbReference>
<dbReference type="RefSeq" id="NP_648373.1">
    <property type="nucleotide sequence ID" value="NM_140116.3"/>
</dbReference>
<dbReference type="SMR" id="Q9VT70"/>
<dbReference type="BioGRID" id="64556">
    <property type="interactions" value="17"/>
</dbReference>
<dbReference type="FunCoup" id="Q9VT70">
    <property type="interactions" value="734"/>
</dbReference>
<dbReference type="IntAct" id="Q9VT70">
    <property type="interactions" value="3"/>
</dbReference>
<dbReference type="STRING" id="7227.FBpp0112072"/>
<dbReference type="PaxDb" id="7227-FBpp0112072"/>
<dbReference type="DNASU" id="39169"/>
<dbReference type="EnsemblMetazoa" id="FBtr0076344">
    <property type="protein sequence ID" value="FBpp0076073"/>
    <property type="gene ID" value="FBgn0036059"/>
</dbReference>
<dbReference type="GeneID" id="39169"/>
<dbReference type="KEGG" id="dme:Dmel_CG8104"/>
<dbReference type="UCSC" id="CG8104-RA">
    <property type="organism name" value="d. melanogaster"/>
</dbReference>
<dbReference type="AGR" id="FB:FBgn0036059"/>
<dbReference type="CTD" id="39169"/>
<dbReference type="FlyBase" id="FBgn0036059">
    <property type="gene designation" value="nudE"/>
</dbReference>
<dbReference type="VEuPathDB" id="VectorBase:FBgn0036059"/>
<dbReference type="eggNOG" id="KOG1853">
    <property type="taxonomic scope" value="Eukaryota"/>
</dbReference>
<dbReference type="GeneTree" id="ENSGT00390000000111"/>
<dbReference type="InParanoid" id="Q9VT70"/>
<dbReference type="OrthoDB" id="5877028at2759"/>
<dbReference type="BioGRID-ORCS" id="39169">
    <property type="hits" value="0 hits in 3 CRISPR screens"/>
</dbReference>
<dbReference type="CD-CODE" id="2838EF58">
    <property type="entry name" value="Centrosome"/>
</dbReference>
<dbReference type="ChiTaRS" id="nudE">
    <property type="organism name" value="fly"/>
</dbReference>
<dbReference type="GenomeRNAi" id="39169"/>
<dbReference type="PRO" id="PR:Q9VT70"/>
<dbReference type="Proteomes" id="UP000000803">
    <property type="component" value="Chromosome 3L"/>
</dbReference>
<dbReference type="Bgee" id="FBgn0036059">
    <property type="expression patterns" value="Expressed in adult tracheocyte (Drosophila) in insect leg and 245 other cell types or tissues"/>
</dbReference>
<dbReference type="ExpressionAtlas" id="Q9VT70">
    <property type="expression patterns" value="baseline and differential"/>
</dbReference>
<dbReference type="GO" id="GO:0030424">
    <property type="term" value="C:axon"/>
    <property type="evidence" value="ECO:0000314"/>
    <property type="project" value="FlyBase"/>
</dbReference>
<dbReference type="GO" id="GO:0005813">
    <property type="term" value="C:centrosome"/>
    <property type="evidence" value="ECO:0000318"/>
    <property type="project" value="GO_Central"/>
</dbReference>
<dbReference type="GO" id="GO:0005737">
    <property type="term" value="C:cytoplasm"/>
    <property type="evidence" value="ECO:0007669"/>
    <property type="project" value="UniProtKB-KW"/>
</dbReference>
<dbReference type="GO" id="GO:0030425">
    <property type="term" value="C:dendrite"/>
    <property type="evidence" value="ECO:0000314"/>
    <property type="project" value="FlyBase"/>
</dbReference>
<dbReference type="GO" id="GO:0005871">
    <property type="term" value="C:kinesin complex"/>
    <property type="evidence" value="ECO:0000318"/>
    <property type="project" value="GO_Central"/>
</dbReference>
<dbReference type="GO" id="GO:0000776">
    <property type="term" value="C:kinetochore"/>
    <property type="evidence" value="ECO:0000314"/>
    <property type="project" value="FlyBase"/>
</dbReference>
<dbReference type="GO" id="GO:0005874">
    <property type="term" value="C:microtubule"/>
    <property type="evidence" value="ECO:0007669"/>
    <property type="project" value="UniProtKB-KW"/>
</dbReference>
<dbReference type="GO" id="GO:0005635">
    <property type="term" value="C:nuclear envelope"/>
    <property type="evidence" value="ECO:0000314"/>
    <property type="project" value="FlyBase"/>
</dbReference>
<dbReference type="GO" id="GO:0005819">
    <property type="term" value="C:spindle"/>
    <property type="evidence" value="ECO:0000314"/>
    <property type="project" value="FlyBase"/>
</dbReference>
<dbReference type="GO" id="GO:0070732">
    <property type="term" value="C:spindle envelope"/>
    <property type="evidence" value="ECO:0000314"/>
    <property type="project" value="FlyBase"/>
</dbReference>
<dbReference type="GO" id="GO:0031616">
    <property type="term" value="C:spindle pole centrosome"/>
    <property type="evidence" value="ECO:0000250"/>
    <property type="project" value="UniProtKB"/>
</dbReference>
<dbReference type="GO" id="GO:0008017">
    <property type="term" value="F:microtubule binding"/>
    <property type="evidence" value="ECO:0000250"/>
    <property type="project" value="UniProtKB"/>
</dbReference>
<dbReference type="GO" id="GO:0007409">
    <property type="term" value="P:axonogenesis"/>
    <property type="evidence" value="ECO:0000315"/>
    <property type="project" value="FlyBase"/>
</dbReference>
<dbReference type="GO" id="GO:0007298">
    <property type="term" value="P:border follicle cell migration"/>
    <property type="evidence" value="ECO:0000315"/>
    <property type="project" value="FlyBase"/>
</dbReference>
<dbReference type="GO" id="GO:0051301">
    <property type="term" value="P:cell division"/>
    <property type="evidence" value="ECO:0007669"/>
    <property type="project" value="UniProtKB-KW"/>
</dbReference>
<dbReference type="GO" id="GO:0016477">
    <property type="term" value="P:cell migration"/>
    <property type="evidence" value="ECO:0000318"/>
    <property type="project" value="GO_Central"/>
</dbReference>
<dbReference type="GO" id="GO:0051298">
    <property type="term" value="P:centrosome duplication"/>
    <property type="evidence" value="ECO:0000250"/>
    <property type="project" value="UniProtKB"/>
</dbReference>
<dbReference type="GO" id="GO:0051642">
    <property type="term" value="P:centrosome localization"/>
    <property type="evidence" value="ECO:0000315"/>
    <property type="project" value="FlyBase"/>
</dbReference>
<dbReference type="GO" id="GO:0007059">
    <property type="term" value="P:chromosome segregation"/>
    <property type="evidence" value="ECO:0000318"/>
    <property type="project" value="GO_Central"/>
</dbReference>
<dbReference type="GO" id="GO:0048813">
    <property type="term" value="P:dendrite morphogenesis"/>
    <property type="evidence" value="ECO:0000315"/>
    <property type="project" value="FlyBase"/>
</dbReference>
<dbReference type="GO" id="GO:0051303">
    <property type="term" value="P:establishment of chromosome localization"/>
    <property type="evidence" value="ECO:0000318"/>
    <property type="project" value="GO_Central"/>
</dbReference>
<dbReference type="GO" id="GO:0000132">
    <property type="term" value="P:establishment of mitotic spindle orientation"/>
    <property type="evidence" value="ECO:0000318"/>
    <property type="project" value="GO_Central"/>
</dbReference>
<dbReference type="GO" id="GO:0030951">
    <property type="term" value="P:establishment or maintenance of microtubule cytoskeleton polarity"/>
    <property type="evidence" value="ECO:0000315"/>
    <property type="project" value="FlyBase"/>
</dbReference>
<dbReference type="GO" id="GO:0007294">
    <property type="term" value="P:germarium-derived oocyte fate determination"/>
    <property type="evidence" value="ECO:0000315"/>
    <property type="project" value="FlyBase"/>
</dbReference>
<dbReference type="GO" id="GO:0007060">
    <property type="term" value="P:male meiosis chromosome segregation"/>
    <property type="evidence" value="ECO:0000315"/>
    <property type="project" value="FlyBase"/>
</dbReference>
<dbReference type="GO" id="GO:0007020">
    <property type="term" value="P:microtubule nucleation"/>
    <property type="evidence" value="ECO:0000318"/>
    <property type="project" value="GO_Central"/>
</dbReference>
<dbReference type="GO" id="GO:0007100">
    <property type="term" value="P:mitotic centrosome separation"/>
    <property type="evidence" value="ECO:0000318"/>
    <property type="project" value="GO_Central"/>
</dbReference>
<dbReference type="GO" id="GO:0007080">
    <property type="term" value="P:mitotic metaphase chromosome alignment"/>
    <property type="evidence" value="ECO:0000315"/>
    <property type="project" value="FlyBase"/>
</dbReference>
<dbReference type="GO" id="GO:0007052">
    <property type="term" value="P:mitotic spindle organization"/>
    <property type="evidence" value="ECO:0000315"/>
    <property type="project" value="FlyBase"/>
</dbReference>
<dbReference type="GO" id="GO:0051647">
    <property type="term" value="P:nucleus localization"/>
    <property type="evidence" value="ECO:0000315"/>
    <property type="project" value="FlyBase"/>
</dbReference>
<dbReference type="GO" id="GO:0050775">
    <property type="term" value="P:positive regulation of dendrite morphogenesis"/>
    <property type="evidence" value="ECO:0000316"/>
    <property type="project" value="FlyBase"/>
</dbReference>
<dbReference type="GO" id="GO:0047496">
    <property type="term" value="P:vesicle transport along microtubule"/>
    <property type="evidence" value="ECO:0000318"/>
    <property type="project" value="GO_Central"/>
</dbReference>
<dbReference type="Gene3D" id="6.10.250.1080">
    <property type="match status" value="1"/>
</dbReference>
<dbReference type="InterPro" id="IPR033494">
    <property type="entry name" value="NUDE"/>
</dbReference>
<dbReference type="InterPro" id="IPR006964">
    <property type="entry name" value="NUDE_dom"/>
</dbReference>
<dbReference type="PANTHER" id="PTHR10921:SF1">
    <property type="entry name" value="NUCLEAR DISTRIBUTION PROTEIN NUDE HOMOLOG"/>
    <property type="match status" value="1"/>
</dbReference>
<dbReference type="PANTHER" id="PTHR10921">
    <property type="entry name" value="NUCLEAR DISTRIBUTION PROTEIN NUDE HOMOLOG 1"/>
    <property type="match status" value="1"/>
</dbReference>
<dbReference type="Pfam" id="PF04880">
    <property type="entry name" value="NUDE_C"/>
    <property type="match status" value="1"/>
</dbReference>
<accession>Q9VT70</accession>
<accession>Q95RM2</accession>
<organism>
    <name type="scientific">Drosophila melanogaster</name>
    <name type="common">Fruit fly</name>
    <dbReference type="NCBI Taxonomy" id="7227"/>
    <lineage>
        <taxon>Eukaryota</taxon>
        <taxon>Metazoa</taxon>
        <taxon>Ecdysozoa</taxon>
        <taxon>Arthropoda</taxon>
        <taxon>Hexapoda</taxon>
        <taxon>Insecta</taxon>
        <taxon>Pterygota</taxon>
        <taxon>Neoptera</taxon>
        <taxon>Endopterygota</taxon>
        <taxon>Diptera</taxon>
        <taxon>Brachycera</taxon>
        <taxon>Muscomorpha</taxon>
        <taxon>Ephydroidea</taxon>
        <taxon>Drosophilidae</taxon>
        <taxon>Drosophila</taxon>
        <taxon>Sophophora</taxon>
    </lineage>
</organism>
<proteinExistence type="evidence at transcript level"/>
<sequence>MESPPMFNSVEDECRYWKERSKQYHKEWTDVKQEYDEFVEQSREMEIEMDATLDQKQSIIKDLTAKLTMFERENESLKLKLESHGIDMSNMEKQLETVKKDRDTMKVYLRQLEQKNDDLERAHRILNESIENFEKMLDQAYEKNALLELEVDEKGLLQEKLQRLMDETRDLKQELNVKSRFTPVVNGTSVPTANDTNTVNSSMNSSASLPNGIVANGELVKHDNAVATRATSVSVNALNGSLVNRNEYNQQHSLKSDGDETEDVPREWSANAAATPLLPAIHTSGAGRTALLLAGCRVVWILQFSVIHKPQIRNPIT</sequence>
<keyword id="KW-0131">Cell cycle</keyword>
<keyword id="KW-0132">Cell division</keyword>
<keyword id="KW-0175">Coiled coil</keyword>
<keyword id="KW-0963">Cytoplasm</keyword>
<keyword id="KW-0206">Cytoskeleton</keyword>
<keyword id="KW-0493">Microtubule</keyword>
<keyword id="KW-0498">Mitosis</keyword>
<keyword id="KW-1185">Reference proteome</keyword>
<gene>
    <name evidence="6 8" type="primary">nudE</name>
    <name evidence="8" type="ORF">CG8104</name>
</gene>
<comment type="function">
    <text evidence="2 5">Chaperone protein with functions in nuclear localization (PubMed:26490864). Required for centrosome duplication and formation and function of the mitotic spindle (By similarity). In postmitotic neurons, acts with nudC downstream of dar1 to ensure correct positioning of the nuclei in primary dendrites and as a consequence, is required for determining multipolar neuron morphology (PubMed:26490864).</text>
</comment>
<comment type="subcellular location">
    <subcellularLocation>
        <location evidence="1">Cytoplasm</location>
        <location evidence="1">Cytoskeleton</location>
    </subcellularLocation>
    <subcellularLocation>
        <location evidence="1">Cytoplasm</location>
        <location evidence="1">Cytoskeleton</location>
        <location evidence="1">Microtubule organizing center</location>
        <location evidence="1">Centrosome</location>
    </subcellularLocation>
    <subcellularLocation>
        <location evidence="1">Cytoplasm</location>
        <location evidence="1">Cytoskeleton</location>
        <location evidence="1">Spindle</location>
    </subcellularLocation>
    <text evidence="1">Localizes to the interphase centrosome and to the mitotic spindle.</text>
</comment>
<comment type="disruption phenotype">
    <text evidence="5">RNAi-mediated knockdown results in multipolar Class I dendritic arborizing neurons forming a bipolar morphology (PubMed:26490864). Dendritic arborization is unaffected (PubMed:26490864).</text>
</comment>
<comment type="similarity">
    <text evidence="7">Belongs to the nudE family.</text>
</comment>
<evidence type="ECO:0000250" key="1"/>
<evidence type="ECO:0000250" key="2">
    <source>
        <dbReference type="UniProtKB" id="Q9NXR1"/>
    </source>
</evidence>
<evidence type="ECO:0000255" key="3"/>
<evidence type="ECO:0000256" key="4">
    <source>
        <dbReference type="SAM" id="MobiDB-lite"/>
    </source>
</evidence>
<evidence type="ECO:0000269" key="5">
    <source>
    </source>
</evidence>
<evidence type="ECO:0000303" key="6">
    <source>
    </source>
</evidence>
<evidence type="ECO:0000305" key="7"/>
<evidence type="ECO:0000312" key="8">
    <source>
        <dbReference type="FlyBase" id="FBgn0036059"/>
    </source>
</evidence>
<protein>
    <recommendedName>
        <fullName evidence="6">Nuclear distribution protein nudE homolog</fullName>
    </recommendedName>
</protein>